<proteinExistence type="predicted"/>
<comment type="function">
    <text>Repression of replication initiation (possible).</text>
</comment>
<comment type="miscellaneous">
    <text>The expression of the D5 protein is developmentally regulated.</text>
</comment>
<keyword id="KW-0614">Plasmid</keyword>
<sequence>MYQKENCVEKSMTGAVIYDECNIHGRVETNSTHALFYDDIETNNSRCNNFRNLTNLIKLSLMNVLMTSLESLFFIKNIMKLMMVICLEWKTALLKLLLFQWIVQKIVKQLLKNSTFVQNLKMYIILQTLHKRNPIDLHVQIHCATIVRMKTFKTILILKQQSVLQSMVHLILNFYQQFTIQSLMAQITVWKSQ</sequence>
<protein>
    <recommendedName>
        <fullName>Protein D5</fullName>
    </recommendedName>
</protein>
<geneLocation type="plasmid">
    <name>Ddp1</name>
</geneLocation>
<gene>
    <name type="primary">ddpE</name>
    <name type="synonym">D5</name>
    <name type="ORF">DDB_G0294433</name>
</gene>
<dbReference type="EMBL" id="X13273">
    <property type="protein sequence ID" value="CAA31638.1"/>
    <property type="molecule type" value="Genomic_DNA"/>
</dbReference>
<dbReference type="PIR" id="S01975">
    <property type="entry name" value="S01975"/>
</dbReference>
<feature type="chain" id="PRO_0000079764" description="Protein D5">
    <location>
        <begin position="1"/>
        <end position="193"/>
    </location>
</feature>
<accession>P10382</accession>
<organism>
    <name type="scientific">Dictyostelium discoideum</name>
    <name type="common">Social amoeba</name>
    <dbReference type="NCBI Taxonomy" id="44689"/>
    <lineage>
        <taxon>Eukaryota</taxon>
        <taxon>Amoebozoa</taxon>
        <taxon>Evosea</taxon>
        <taxon>Eumycetozoa</taxon>
        <taxon>Dictyostelia</taxon>
        <taxon>Dictyosteliales</taxon>
        <taxon>Dictyosteliaceae</taxon>
        <taxon>Dictyostelium</taxon>
    </lineage>
</organism>
<reference key="1">
    <citation type="journal article" date="1988" name="Nucleic Acids Res.">
        <title>Nucleotide sequence of a developmentally regulated Dictyostelium discoideum endogenous plasmid gene and 5' flanking region.</title>
        <authorList>
            <person name="Farrar N.A."/>
            <person name="Longhurst T.J."/>
            <person name="Leigh D.A."/>
            <person name="Williams K.L."/>
        </authorList>
    </citation>
    <scope>NUCLEOTIDE SEQUENCE [GENOMIC DNA]</scope>
    <source>
        <strain>NC-4</strain>
        <strain>V12</strain>
    </source>
</reference>
<name>D5_DICDI</name>